<name>RS8_OPITP</name>
<accession>B1ZND4</accession>
<protein>
    <recommendedName>
        <fullName evidence="1">Small ribosomal subunit protein uS8</fullName>
    </recommendedName>
    <alternativeName>
        <fullName evidence="2">30S ribosomal protein S8</fullName>
    </alternativeName>
</protein>
<comment type="function">
    <text evidence="1">One of the primary rRNA binding proteins, it binds directly to 16S rRNA central domain where it helps coordinate assembly of the platform of the 30S subunit.</text>
</comment>
<comment type="subunit">
    <text evidence="1">Part of the 30S ribosomal subunit. Contacts proteins S5 and S12.</text>
</comment>
<comment type="similarity">
    <text evidence="1">Belongs to the universal ribosomal protein uS8 family.</text>
</comment>
<evidence type="ECO:0000255" key="1">
    <source>
        <dbReference type="HAMAP-Rule" id="MF_01302"/>
    </source>
</evidence>
<evidence type="ECO:0000305" key="2"/>
<reference key="1">
    <citation type="journal article" date="2011" name="J. Bacteriol.">
        <title>Genome sequence of the verrucomicrobium Opitutus terrae PB90-1, an abundant inhabitant of rice paddy soil ecosystems.</title>
        <authorList>
            <person name="van Passel M.W."/>
            <person name="Kant R."/>
            <person name="Palva A."/>
            <person name="Copeland A."/>
            <person name="Lucas S."/>
            <person name="Lapidus A."/>
            <person name="Glavina del Rio T."/>
            <person name="Pitluck S."/>
            <person name="Goltsman E."/>
            <person name="Clum A."/>
            <person name="Sun H."/>
            <person name="Schmutz J."/>
            <person name="Larimer F.W."/>
            <person name="Land M.L."/>
            <person name="Hauser L."/>
            <person name="Kyrpides N."/>
            <person name="Mikhailova N."/>
            <person name="Richardson P.P."/>
            <person name="Janssen P.H."/>
            <person name="de Vos W.M."/>
            <person name="Smidt H."/>
        </authorList>
    </citation>
    <scope>NUCLEOTIDE SEQUENCE [LARGE SCALE GENOMIC DNA]</scope>
    <source>
        <strain>DSM 11246 / JCM 15787 / PB90-1</strain>
    </source>
</reference>
<keyword id="KW-1185">Reference proteome</keyword>
<keyword id="KW-0687">Ribonucleoprotein</keyword>
<keyword id="KW-0689">Ribosomal protein</keyword>
<keyword id="KW-0694">RNA-binding</keyword>
<keyword id="KW-0699">rRNA-binding</keyword>
<organism>
    <name type="scientific">Opitutus terrae (strain DSM 11246 / JCM 15787 / PB90-1)</name>
    <dbReference type="NCBI Taxonomy" id="452637"/>
    <lineage>
        <taxon>Bacteria</taxon>
        <taxon>Pseudomonadati</taxon>
        <taxon>Verrucomicrobiota</taxon>
        <taxon>Opitutia</taxon>
        <taxon>Opitutales</taxon>
        <taxon>Opitutaceae</taxon>
        <taxon>Opitutus</taxon>
    </lineage>
</organism>
<proteinExistence type="inferred from homology"/>
<gene>
    <name evidence="1" type="primary">rpsH</name>
    <name type="ordered locus">Oter_0212</name>
</gene>
<sequence length="130" mass="14170">MTDPISDFLTRLRNASKARQAETTSPHSKLREAIAAILKAEGYIADYKDGTDAAGHKTLVVALKYVDSAPAITGLTRVSTPGRRLYYSYQEIPRVLNGLGISIVSTSRGLMKDADCRRNKAGGELICNVW</sequence>
<feature type="chain" id="PRO_1000140588" description="Small ribosomal subunit protein uS8">
    <location>
        <begin position="1"/>
        <end position="130"/>
    </location>
</feature>
<dbReference type="EMBL" id="CP001032">
    <property type="protein sequence ID" value="ACB73503.1"/>
    <property type="molecule type" value="Genomic_DNA"/>
</dbReference>
<dbReference type="RefSeq" id="WP_012373041.1">
    <property type="nucleotide sequence ID" value="NC_010571.1"/>
</dbReference>
<dbReference type="SMR" id="B1ZND4"/>
<dbReference type="STRING" id="452637.Oter_0212"/>
<dbReference type="KEGG" id="ote:Oter_0212"/>
<dbReference type="eggNOG" id="COG0096">
    <property type="taxonomic scope" value="Bacteria"/>
</dbReference>
<dbReference type="HOGENOM" id="CLU_098428_0_2_0"/>
<dbReference type="OrthoDB" id="9802617at2"/>
<dbReference type="Proteomes" id="UP000007013">
    <property type="component" value="Chromosome"/>
</dbReference>
<dbReference type="GO" id="GO:1990904">
    <property type="term" value="C:ribonucleoprotein complex"/>
    <property type="evidence" value="ECO:0007669"/>
    <property type="project" value="UniProtKB-KW"/>
</dbReference>
<dbReference type="GO" id="GO:0005840">
    <property type="term" value="C:ribosome"/>
    <property type="evidence" value="ECO:0007669"/>
    <property type="project" value="UniProtKB-KW"/>
</dbReference>
<dbReference type="GO" id="GO:0019843">
    <property type="term" value="F:rRNA binding"/>
    <property type="evidence" value="ECO:0007669"/>
    <property type="project" value="UniProtKB-UniRule"/>
</dbReference>
<dbReference type="GO" id="GO:0003735">
    <property type="term" value="F:structural constituent of ribosome"/>
    <property type="evidence" value="ECO:0007669"/>
    <property type="project" value="InterPro"/>
</dbReference>
<dbReference type="GO" id="GO:0006412">
    <property type="term" value="P:translation"/>
    <property type="evidence" value="ECO:0007669"/>
    <property type="project" value="UniProtKB-UniRule"/>
</dbReference>
<dbReference type="FunFam" id="3.30.1370.30:FF:000002">
    <property type="entry name" value="30S ribosomal protein S8"/>
    <property type="match status" value="1"/>
</dbReference>
<dbReference type="FunFam" id="3.30.1490.10:FF:000001">
    <property type="entry name" value="30S ribosomal protein S8"/>
    <property type="match status" value="1"/>
</dbReference>
<dbReference type="Gene3D" id="3.30.1370.30">
    <property type="match status" value="1"/>
</dbReference>
<dbReference type="Gene3D" id="3.30.1490.10">
    <property type="match status" value="1"/>
</dbReference>
<dbReference type="HAMAP" id="MF_01302_B">
    <property type="entry name" value="Ribosomal_uS8_B"/>
    <property type="match status" value="1"/>
</dbReference>
<dbReference type="InterPro" id="IPR000630">
    <property type="entry name" value="Ribosomal_uS8"/>
</dbReference>
<dbReference type="InterPro" id="IPR035987">
    <property type="entry name" value="Ribosomal_uS8_sf"/>
</dbReference>
<dbReference type="NCBIfam" id="NF001109">
    <property type="entry name" value="PRK00136.1"/>
    <property type="match status" value="1"/>
</dbReference>
<dbReference type="PANTHER" id="PTHR11758">
    <property type="entry name" value="40S RIBOSOMAL PROTEIN S15A"/>
    <property type="match status" value="1"/>
</dbReference>
<dbReference type="Pfam" id="PF00410">
    <property type="entry name" value="Ribosomal_S8"/>
    <property type="match status" value="1"/>
</dbReference>
<dbReference type="SUPFAM" id="SSF56047">
    <property type="entry name" value="Ribosomal protein S8"/>
    <property type="match status" value="1"/>
</dbReference>